<protein>
    <recommendedName>
        <fullName evidence="2">L-lactate dehydrogenase 2</fullName>
        <shortName evidence="2">L-LDH 2</shortName>
        <ecNumber evidence="2">1.1.1.27</ecNumber>
    </recommendedName>
</protein>
<feature type="chain" id="PRO_0000237558" description="L-lactate dehydrogenase 2">
    <location>
        <begin position="1"/>
        <end position="319"/>
    </location>
</feature>
<feature type="active site" description="Proton acceptor" evidence="2">
    <location>
        <position position="178"/>
    </location>
</feature>
<feature type="binding site" evidence="2">
    <location>
        <position position="16"/>
    </location>
    <ligand>
        <name>NAD(+)</name>
        <dbReference type="ChEBI" id="CHEBI:57540"/>
    </ligand>
</feature>
<feature type="binding site" evidence="2">
    <location>
        <position position="37"/>
    </location>
    <ligand>
        <name>NAD(+)</name>
        <dbReference type="ChEBI" id="CHEBI:57540"/>
    </ligand>
</feature>
<feature type="binding site" evidence="2">
    <location>
        <position position="42"/>
    </location>
    <ligand>
        <name>NAD(+)</name>
        <dbReference type="ChEBI" id="CHEBI:57540"/>
    </ligand>
</feature>
<feature type="binding site" evidence="2">
    <location>
        <position position="68"/>
    </location>
    <ligand>
        <name>NAD(+)</name>
        <dbReference type="ChEBI" id="CHEBI:57540"/>
    </ligand>
</feature>
<feature type="binding site" evidence="2">
    <location>
        <begin position="82"/>
        <end position="83"/>
    </location>
    <ligand>
        <name>NAD(+)</name>
        <dbReference type="ChEBI" id="CHEBI:57540"/>
    </ligand>
</feature>
<feature type="binding site" evidence="2">
    <location>
        <position position="85"/>
    </location>
    <ligand>
        <name>substrate</name>
    </ligand>
</feature>
<feature type="binding site" evidence="2">
    <location>
        <position position="91"/>
    </location>
    <ligand>
        <name>substrate</name>
    </ligand>
</feature>
<feature type="binding site" evidence="2">
    <location>
        <position position="104"/>
    </location>
    <ligand>
        <name>NAD(+)</name>
        <dbReference type="ChEBI" id="CHEBI:57540"/>
    </ligand>
</feature>
<feature type="binding site" evidence="2">
    <location>
        <begin position="121"/>
        <end position="123"/>
    </location>
    <ligand>
        <name>NAD(+)</name>
        <dbReference type="ChEBI" id="CHEBI:57540"/>
    </ligand>
</feature>
<feature type="binding site" evidence="2">
    <location>
        <begin position="123"/>
        <end position="126"/>
    </location>
    <ligand>
        <name>substrate</name>
    </ligand>
</feature>
<feature type="binding site" evidence="2">
    <location>
        <position position="146"/>
    </location>
    <ligand>
        <name>NAD(+)</name>
        <dbReference type="ChEBI" id="CHEBI:57540"/>
    </ligand>
</feature>
<feature type="binding site" evidence="2">
    <location>
        <begin position="151"/>
        <end position="154"/>
    </location>
    <ligand>
        <name>substrate</name>
    </ligand>
</feature>
<feature type="binding site" evidence="2">
    <location>
        <position position="231"/>
    </location>
    <ligand>
        <name>substrate</name>
    </ligand>
</feature>
<feature type="modified residue" description="Phosphotyrosine" evidence="2">
    <location>
        <position position="222"/>
    </location>
</feature>
<organism>
    <name type="scientific">Staphylococcus aureus (strain bovine RF122 / ET3-1)</name>
    <dbReference type="NCBI Taxonomy" id="273036"/>
    <lineage>
        <taxon>Bacteria</taxon>
        <taxon>Bacillati</taxon>
        <taxon>Bacillota</taxon>
        <taxon>Bacilli</taxon>
        <taxon>Bacillales</taxon>
        <taxon>Staphylococcaceae</taxon>
        <taxon>Staphylococcus</taxon>
    </lineage>
</organism>
<evidence type="ECO:0000250" key="1">
    <source>
        <dbReference type="UniProtKB" id="Q5HCV0"/>
    </source>
</evidence>
<evidence type="ECO:0000255" key="2">
    <source>
        <dbReference type="HAMAP-Rule" id="MF_00488"/>
    </source>
</evidence>
<evidence type="ECO:0000305" key="3"/>
<comment type="function">
    <text evidence="1 2">Catalyzes the conversion of lactate to pyruvate (Potential). Contributes to S.aureus growth during nitrosative stress in both aerobically and anaerobically cultured cells, despite playing a secondary role in this resistance mechanism (By similarity).</text>
</comment>
<comment type="catalytic activity">
    <reaction evidence="2">
        <text>(S)-lactate + NAD(+) = pyruvate + NADH + H(+)</text>
        <dbReference type="Rhea" id="RHEA:23444"/>
        <dbReference type="ChEBI" id="CHEBI:15361"/>
        <dbReference type="ChEBI" id="CHEBI:15378"/>
        <dbReference type="ChEBI" id="CHEBI:16651"/>
        <dbReference type="ChEBI" id="CHEBI:57540"/>
        <dbReference type="ChEBI" id="CHEBI:57945"/>
        <dbReference type="EC" id="1.1.1.27"/>
    </reaction>
</comment>
<comment type="pathway">
    <text evidence="2">Fermentation; pyruvate fermentation to lactate; (S)-lactate from pyruvate: step 1/1.</text>
</comment>
<comment type="subunit">
    <text evidence="2">Homotetramer.</text>
</comment>
<comment type="subcellular location">
    <subcellularLocation>
        <location evidence="2">Cytoplasm</location>
    </subcellularLocation>
</comment>
<comment type="similarity">
    <text evidence="2 3">Belongs to the LDH/MDH superfamily. LDH family.</text>
</comment>
<keyword id="KW-0963">Cytoplasm</keyword>
<keyword id="KW-0520">NAD</keyword>
<keyword id="KW-0560">Oxidoreductase</keyword>
<keyword id="KW-0597">Phosphoprotein</keyword>
<keyword id="KW-0346">Stress response</keyword>
<name>LDH2_STAAB</name>
<gene>
    <name evidence="2" type="primary">ldh2</name>
    <name type="ordered locus">SAB2475c</name>
</gene>
<proteinExistence type="inferred from homology"/>
<dbReference type="EC" id="1.1.1.27" evidence="2"/>
<dbReference type="EMBL" id="AJ938182">
    <property type="protein sequence ID" value="CAI82163.1"/>
    <property type="molecule type" value="Genomic_DNA"/>
</dbReference>
<dbReference type="RefSeq" id="WP_000846637.1">
    <property type="nucleotide sequence ID" value="NC_007622.1"/>
</dbReference>
<dbReference type="SMR" id="Q2YWF6"/>
<dbReference type="KEGG" id="sab:SAB2475c"/>
<dbReference type="HOGENOM" id="CLU_045401_1_1_9"/>
<dbReference type="UniPathway" id="UPA00554">
    <property type="reaction ID" value="UER00611"/>
</dbReference>
<dbReference type="GO" id="GO:0005737">
    <property type="term" value="C:cytoplasm"/>
    <property type="evidence" value="ECO:0007669"/>
    <property type="project" value="UniProtKB-SubCell"/>
</dbReference>
<dbReference type="GO" id="GO:0004459">
    <property type="term" value="F:L-lactate dehydrogenase activity"/>
    <property type="evidence" value="ECO:0007669"/>
    <property type="project" value="UniProtKB-UniRule"/>
</dbReference>
<dbReference type="GO" id="GO:0006096">
    <property type="term" value="P:glycolytic process"/>
    <property type="evidence" value="ECO:0007669"/>
    <property type="project" value="UniProtKB-UniRule"/>
</dbReference>
<dbReference type="GO" id="GO:0006089">
    <property type="term" value="P:lactate metabolic process"/>
    <property type="evidence" value="ECO:0007669"/>
    <property type="project" value="TreeGrafter"/>
</dbReference>
<dbReference type="CDD" id="cd05291">
    <property type="entry name" value="HicDH_like"/>
    <property type="match status" value="1"/>
</dbReference>
<dbReference type="FunFam" id="3.40.50.720:FF:000018">
    <property type="entry name" value="Malate dehydrogenase"/>
    <property type="match status" value="1"/>
</dbReference>
<dbReference type="Gene3D" id="3.90.110.10">
    <property type="entry name" value="Lactate dehydrogenase/glycoside hydrolase, family 4, C-terminal"/>
    <property type="match status" value="1"/>
</dbReference>
<dbReference type="Gene3D" id="3.40.50.720">
    <property type="entry name" value="NAD(P)-binding Rossmann-like Domain"/>
    <property type="match status" value="1"/>
</dbReference>
<dbReference type="HAMAP" id="MF_00488">
    <property type="entry name" value="Lactate_dehydrog"/>
    <property type="match status" value="1"/>
</dbReference>
<dbReference type="InterPro" id="IPR001557">
    <property type="entry name" value="L-lactate/malate_DH"/>
</dbReference>
<dbReference type="InterPro" id="IPR011304">
    <property type="entry name" value="L-lactate_DH"/>
</dbReference>
<dbReference type="InterPro" id="IPR018177">
    <property type="entry name" value="L-lactate_DH_AS"/>
</dbReference>
<dbReference type="InterPro" id="IPR022383">
    <property type="entry name" value="Lactate/malate_DH_C"/>
</dbReference>
<dbReference type="InterPro" id="IPR001236">
    <property type="entry name" value="Lactate/malate_DH_N"/>
</dbReference>
<dbReference type="InterPro" id="IPR015955">
    <property type="entry name" value="Lactate_DH/Glyco_Ohase_4_C"/>
</dbReference>
<dbReference type="InterPro" id="IPR036291">
    <property type="entry name" value="NAD(P)-bd_dom_sf"/>
</dbReference>
<dbReference type="NCBIfam" id="TIGR01771">
    <property type="entry name" value="L-LDH-NAD"/>
    <property type="match status" value="1"/>
</dbReference>
<dbReference type="NCBIfam" id="NF000824">
    <property type="entry name" value="PRK00066.1"/>
    <property type="match status" value="1"/>
</dbReference>
<dbReference type="PANTHER" id="PTHR43128">
    <property type="entry name" value="L-2-HYDROXYCARBOXYLATE DEHYDROGENASE (NAD(P)(+))"/>
    <property type="match status" value="1"/>
</dbReference>
<dbReference type="PANTHER" id="PTHR43128:SF16">
    <property type="entry name" value="L-LACTATE DEHYDROGENASE"/>
    <property type="match status" value="1"/>
</dbReference>
<dbReference type="Pfam" id="PF02866">
    <property type="entry name" value="Ldh_1_C"/>
    <property type="match status" value="1"/>
</dbReference>
<dbReference type="Pfam" id="PF00056">
    <property type="entry name" value="Ldh_1_N"/>
    <property type="match status" value="1"/>
</dbReference>
<dbReference type="PIRSF" id="PIRSF000102">
    <property type="entry name" value="Lac_mal_DH"/>
    <property type="match status" value="1"/>
</dbReference>
<dbReference type="PRINTS" id="PR00086">
    <property type="entry name" value="LLDHDRGNASE"/>
</dbReference>
<dbReference type="SUPFAM" id="SSF56327">
    <property type="entry name" value="LDH C-terminal domain-like"/>
    <property type="match status" value="1"/>
</dbReference>
<dbReference type="SUPFAM" id="SSF51735">
    <property type="entry name" value="NAD(P)-binding Rossmann-fold domains"/>
    <property type="match status" value="1"/>
</dbReference>
<dbReference type="PROSITE" id="PS00064">
    <property type="entry name" value="L_LDH"/>
    <property type="match status" value="1"/>
</dbReference>
<accession>Q2YWF6</accession>
<reference key="1">
    <citation type="journal article" date="2007" name="PLoS ONE">
        <title>Molecular correlates of host specialization in Staphylococcus aureus.</title>
        <authorList>
            <person name="Herron-Olson L."/>
            <person name="Fitzgerald J.R."/>
            <person name="Musser J.M."/>
            <person name="Kapur V."/>
        </authorList>
    </citation>
    <scope>NUCLEOTIDE SEQUENCE [LARGE SCALE GENOMIC DNA]</scope>
    <source>
        <strain>bovine RF122 / ET3-1</strain>
    </source>
</reference>
<sequence length="319" mass="34420">MKTFGKKVVLIGDGSVGSSYAFAMVTQGVADEFVIIDIAKDKVKADVQDLNHGTVHSPSPVDVKAGEYEDCKDADLVVITAGAPQKPGETRLQLVEKNTKIMKSIVKSVMDSGFDGYFLIAANPVDILTRFVKEYTGLPAERVIGSGTVLDSARLQYLISQELGVAPSSVDASIIGEHGDTELAVWSQANVAGISVYDTLKEQTGSEAKAEEIYVNTRDAAYEIIQAKGSTYYGIALALMRISKAILNNENNVLNVSIQLDGQYGGHKGVYLGVPTLVNQHGAVKIYEMPLSAEEQALFDKSVKTLEDTFDSIKYLLED</sequence>